<protein>
    <recommendedName>
        <fullName evidence="1">DNA-directed RNA polymerase subunit beta</fullName>
        <shortName evidence="1">RNAP subunit beta</shortName>
        <ecNumber evidence="1">2.7.7.6</ecNumber>
    </recommendedName>
    <alternativeName>
        <fullName evidence="1">RNA polymerase subunit beta</fullName>
    </alternativeName>
    <alternativeName>
        <fullName evidence="1">Transcriptase subunit beta</fullName>
    </alternativeName>
</protein>
<reference key="1">
    <citation type="journal article" date="2004" name="Nat. Biotechnol.">
        <title>Complete sequence and comparative genome analysis of the dairy bacterium Streptococcus thermophilus.</title>
        <authorList>
            <person name="Bolotin A."/>
            <person name="Quinquis B."/>
            <person name="Renault P."/>
            <person name="Sorokin A."/>
            <person name="Ehrlich S.D."/>
            <person name="Kulakauskas S."/>
            <person name="Lapidus A."/>
            <person name="Goltsman E."/>
            <person name="Mazur M."/>
            <person name="Pusch G.D."/>
            <person name="Fonstein M."/>
            <person name="Overbeek R."/>
            <person name="Kyprides N."/>
            <person name="Purnelle B."/>
            <person name="Prozzi D."/>
            <person name="Ngui K."/>
            <person name="Masuy D."/>
            <person name="Hancy F."/>
            <person name="Burteau S."/>
            <person name="Boutry M."/>
            <person name="Delcour J."/>
            <person name="Goffeau A."/>
            <person name="Hols P."/>
        </authorList>
    </citation>
    <scope>NUCLEOTIDE SEQUENCE [LARGE SCALE GENOMIC DNA]</scope>
    <source>
        <strain>CNRZ 1066</strain>
    </source>
</reference>
<sequence>MAGHDVQYGKHRTRRSFSRIKEVLGLPNLIEIQTDSFKEFLDTGLKEVFEDVLPISNFTDTMELEFVGYELKEPKYTLEEARIHDASYSAPIFVTFRLINKETGEIKTQEVFFGDFPIMTEMGTFIINGGERIIVSQLVRSPGVYFNDKVDKNGKVGYGSTVIPNRGAWLELETDSKDIAYTRIDRTRKIPFTTLVRALGFSGDDEIVDIFGDSELVRNTIEKDIHKNPADSRTDEALKEIYERLRPGEPKTADSSRSLLVARFFDPRRYDLAAVGRYKLNKKLNIKTRLLGQTIAENLVDPETGEILVEAGTEMTRDVIDSIAEHLDGDLNKFVYTPNDYAVVTEPVVLQKFKVVAPNDPDRVVTIVGNANPDDKVRALTTADILAEMSYFLNLAEGIGKVDDIDHLGNRRVRAVGELLANQFRIGLARMERNVRERMSVQDNEALTPQQIINIRPVTAAVKEFFGSSQLSQFMDQHNPLSELSHKRRLSALGPGGLTRDRAGYEVRDVHYTHYGRMCPIETPEGPNIGLINNLSTYGRLNKYGFIQTPYRKVDRATGKVTNEVVWLTADEEDEYIVAQANSKLNEDGTFAEEIVMGRHQGVNQEYPSHLVDFVDVSPKQVVAVATACIPFLENDDSNRALMGANMQRQAVPLIDPKAPFVGTGMEYQAAHDSGAAVIAKHDGKVVYSDADKVEVRREDGSLDVYTIQKFRRSNSGTAYNQRTLVKVGDIVEKGDFIADGPSMEGGEMALGQNPIVAYMTWEGYNFEDAVIMSERLVKDDVYTSVHLEEFESETRDTKLGPEEITRELPNVSEEALKNLDEMGIIRIGAEVKEGDILVGKVTPKGEKDLSAEERLLHAIFGDKSREVRDTSLRVPHGGDGVVRDVKIFTRANGDELQSGVNMLVRVYIAQKRKIKVGDKMAGRHGNKGVVSRIVPVEDMPYLPDGTPVDIMLNPLGVPSRMNIGQVMELHLGMAARNLGIYIATPVFDGASSEDLWDTVREAGMDSDAKTILYDGRTGEPFDNRVSVGVMYMIKLHHMVDDKLHARSVGPYSLVTQQPLGGKAQFGGQRFGEMEVWALEAYGASNILQEILTYKSDDVNGRLKAYEAITKGKPIPKPGVPESFRVLVKELQSLGLDMRVLDEDDYEVELRDLDEGEDDDVMHVDDLEKARVQQAKEAAELEKAKEEALDKTE</sequence>
<name>RPOB_STRT1</name>
<comment type="function">
    <text evidence="1">DNA-dependent RNA polymerase catalyzes the transcription of DNA into RNA using the four ribonucleoside triphosphates as substrates.</text>
</comment>
<comment type="catalytic activity">
    <reaction evidence="1">
        <text>RNA(n) + a ribonucleoside 5'-triphosphate = RNA(n+1) + diphosphate</text>
        <dbReference type="Rhea" id="RHEA:21248"/>
        <dbReference type="Rhea" id="RHEA-COMP:14527"/>
        <dbReference type="Rhea" id="RHEA-COMP:17342"/>
        <dbReference type="ChEBI" id="CHEBI:33019"/>
        <dbReference type="ChEBI" id="CHEBI:61557"/>
        <dbReference type="ChEBI" id="CHEBI:140395"/>
        <dbReference type="EC" id="2.7.7.6"/>
    </reaction>
</comment>
<comment type="subunit">
    <text evidence="1">The RNAP catalytic core consists of 2 alpha, 1 beta, 1 beta' and 1 omega subunit. When a sigma factor is associated with the core the holoenzyme is formed, which can initiate transcription.</text>
</comment>
<comment type="similarity">
    <text evidence="1">Belongs to the RNA polymerase beta chain family.</text>
</comment>
<gene>
    <name evidence="1" type="primary">rpoB</name>
    <name type="ordered locus">str1868</name>
</gene>
<accession>Q5LXV3</accession>
<proteinExistence type="inferred from homology"/>
<evidence type="ECO:0000255" key="1">
    <source>
        <dbReference type="HAMAP-Rule" id="MF_01321"/>
    </source>
</evidence>
<evidence type="ECO:0000256" key="2">
    <source>
        <dbReference type="SAM" id="MobiDB-lite"/>
    </source>
</evidence>
<feature type="chain" id="PRO_0000224112" description="DNA-directed RNA polymerase subunit beta">
    <location>
        <begin position="1"/>
        <end position="1193"/>
    </location>
</feature>
<feature type="region of interest" description="Disordered" evidence="2">
    <location>
        <begin position="1173"/>
        <end position="1193"/>
    </location>
</feature>
<feature type="compositionally biased region" description="Basic and acidic residues" evidence="2">
    <location>
        <begin position="1177"/>
        <end position="1193"/>
    </location>
</feature>
<keyword id="KW-0240">DNA-directed RNA polymerase</keyword>
<keyword id="KW-0548">Nucleotidyltransferase</keyword>
<keyword id="KW-0804">Transcription</keyword>
<keyword id="KW-0808">Transferase</keyword>
<organism>
    <name type="scientific">Streptococcus thermophilus (strain CNRZ 1066)</name>
    <dbReference type="NCBI Taxonomy" id="299768"/>
    <lineage>
        <taxon>Bacteria</taxon>
        <taxon>Bacillati</taxon>
        <taxon>Bacillota</taxon>
        <taxon>Bacilli</taxon>
        <taxon>Lactobacillales</taxon>
        <taxon>Streptococcaceae</taxon>
        <taxon>Streptococcus</taxon>
    </lineage>
</organism>
<dbReference type="EC" id="2.7.7.6" evidence="1"/>
<dbReference type="EMBL" id="CP000024">
    <property type="protein sequence ID" value="AAV63382.1"/>
    <property type="molecule type" value="Genomic_DNA"/>
</dbReference>
<dbReference type="RefSeq" id="WP_002947331.1">
    <property type="nucleotide sequence ID" value="NC_006449.1"/>
</dbReference>
<dbReference type="SMR" id="Q5LXV3"/>
<dbReference type="KEGG" id="stc:str1868"/>
<dbReference type="HOGENOM" id="CLU_000524_4_1_9"/>
<dbReference type="GO" id="GO:0000428">
    <property type="term" value="C:DNA-directed RNA polymerase complex"/>
    <property type="evidence" value="ECO:0007669"/>
    <property type="project" value="UniProtKB-KW"/>
</dbReference>
<dbReference type="GO" id="GO:0003677">
    <property type="term" value="F:DNA binding"/>
    <property type="evidence" value="ECO:0007669"/>
    <property type="project" value="UniProtKB-UniRule"/>
</dbReference>
<dbReference type="GO" id="GO:0003899">
    <property type="term" value="F:DNA-directed RNA polymerase activity"/>
    <property type="evidence" value="ECO:0007669"/>
    <property type="project" value="UniProtKB-UniRule"/>
</dbReference>
<dbReference type="GO" id="GO:0032549">
    <property type="term" value="F:ribonucleoside binding"/>
    <property type="evidence" value="ECO:0007669"/>
    <property type="project" value="InterPro"/>
</dbReference>
<dbReference type="GO" id="GO:0006351">
    <property type="term" value="P:DNA-templated transcription"/>
    <property type="evidence" value="ECO:0007669"/>
    <property type="project" value="UniProtKB-UniRule"/>
</dbReference>
<dbReference type="CDD" id="cd00653">
    <property type="entry name" value="RNA_pol_B_RPB2"/>
    <property type="match status" value="1"/>
</dbReference>
<dbReference type="Gene3D" id="2.40.50.100">
    <property type="match status" value="1"/>
</dbReference>
<dbReference type="Gene3D" id="2.40.50.150">
    <property type="match status" value="1"/>
</dbReference>
<dbReference type="Gene3D" id="3.90.1100.10">
    <property type="match status" value="2"/>
</dbReference>
<dbReference type="Gene3D" id="2.30.150.10">
    <property type="entry name" value="DNA-directed RNA polymerase, beta subunit, external 1 domain"/>
    <property type="match status" value="1"/>
</dbReference>
<dbReference type="Gene3D" id="2.40.270.10">
    <property type="entry name" value="DNA-directed RNA polymerase, subunit 2, domain 6"/>
    <property type="match status" value="1"/>
</dbReference>
<dbReference type="Gene3D" id="3.90.1800.10">
    <property type="entry name" value="RNA polymerase alpha subunit dimerisation domain"/>
    <property type="match status" value="1"/>
</dbReference>
<dbReference type="Gene3D" id="3.90.1110.10">
    <property type="entry name" value="RNA polymerase Rpb2, domain 2"/>
    <property type="match status" value="1"/>
</dbReference>
<dbReference type="HAMAP" id="MF_01321">
    <property type="entry name" value="RNApol_bact_RpoB"/>
    <property type="match status" value="1"/>
</dbReference>
<dbReference type="InterPro" id="IPR042107">
    <property type="entry name" value="DNA-dir_RNA_pol_bsu_ext_1_sf"/>
</dbReference>
<dbReference type="InterPro" id="IPR019462">
    <property type="entry name" value="DNA-dir_RNA_pol_bsu_external_1"/>
</dbReference>
<dbReference type="InterPro" id="IPR015712">
    <property type="entry name" value="DNA-dir_RNA_pol_su2"/>
</dbReference>
<dbReference type="InterPro" id="IPR007120">
    <property type="entry name" value="DNA-dir_RNAP_su2_dom"/>
</dbReference>
<dbReference type="InterPro" id="IPR037033">
    <property type="entry name" value="DNA-dir_RNAP_su2_hyb_sf"/>
</dbReference>
<dbReference type="InterPro" id="IPR010243">
    <property type="entry name" value="RNA_pol_bsu_bac"/>
</dbReference>
<dbReference type="InterPro" id="IPR007121">
    <property type="entry name" value="RNA_pol_bsu_CS"/>
</dbReference>
<dbReference type="InterPro" id="IPR007644">
    <property type="entry name" value="RNA_pol_bsu_protrusion"/>
</dbReference>
<dbReference type="InterPro" id="IPR007642">
    <property type="entry name" value="RNA_pol_Rpb2_2"/>
</dbReference>
<dbReference type="InterPro" id="IPR037034">
    <property type="entry name" value="RNA_pol_Rpb2_2_sf"/>
</dbReference>
<dbReference type="InterPro" id="IPR007645">
    <property type="entry name" value="RNA_pol_Rpb2_3"/>
</dbReference>
<dbReference type="InterPro" id="IPR007641">
    <property type="entry name" value="RNA_pol_Rpb2_7"/>
</dbReference>
<dbReference type="InterPro" id="IPR014724">
    <property type="entry name" value="RNA_pol_RPB2_OB-fold"/>
</dbReference>
<dbReference type="NCBIfam" id="NF001616">
    <property type="entry name" value="PRK00405.1"/>
    <property type="match status" value="1"/>
</dbReference>
<dbReference type="NCBIfam" id="TIGR02013">
    <property type="entry name" value="rpoB"/>
    <property type="match status" value="1"/>
</dbReference>
<dbReference type="PANTHER" id="PTHR20856">
    <property type="entry name" value="DNA-DIRECTED RNA POLYMERASE I SUBUNIT 2"/>
    <property type="match status" value="1"/>
</dbReference>
<dbReference type="Pfam" id="PF04563">
    <property type="entry name" value="RNA_pol_Rpb2_1"/>
    <property type="match status" value="1"/>
</dbReference>
<dbReference type="Pfam" id="PF04561">
    <property type="entry name" value="RNA_pol_Rpb2_2"/>
    <property type="match status" value="2"/>
</dbReference>
<dbReference type="Pfam" id="PF04565">
    <property type="entry name" value="RNA_pol_Rpb2_3"/>
    <property type="match status" value="1"/>
</dbReference>
<dbReference type="Pfam" id="PF10385">
    <property type="entry name" value="RNA_pol_Rpb2_45"/>
    <property type="match status" value="1"/>
</dbReference>
<dbReference type="Pfam" id="PF00562">
    <property type="entry name" value="RNA_pol_Rpb2_6"/>
    <property type="match status" value="1"/>
</dbReference>
<dbReference type="Pfam" id="PF04560">
    <property type="entry name" value="RNA_pol_Rpb2_7"/>
    <property type="match status" value="1"/>
</dbReference>
<dbReference type="SUPFAM" id="SSF64484">
    <property type="entry name" value="beta and beta-prime subunits of DNA dependent RNA-polymerase"/>
    <property type="match status" value="1"/>
</dbReference>
<dbReference type="PROSITE" id="PS01166">
    <property type="entry name" value="RNA_POL_BETA"/>
    <property type="match status" value="1"/>
</dbReference>